<feature type="chain" id="PRO_1000053664" description="Protein GrpE">
    <location>
        <begin position="1"/>
        <end position="192"/>
    </location>
</feature>
<feature type="region of interest" description="Disordered" evidence="2">
    <location>
        <begin position="1"/>
        <end position="34"/>
    </location>
</feature>
<feature type="compositionally biased region" description="Polar residues" evidence="2">
    <location>
        <begin position="21"/>
        <end position="31"/>
    </location>
</feature>
<reference key="1">
    <citation type="journal article" date="2006" name="PLoS Genet.">
        <title>The complete genome sequence and comparative genome analysis of the high pathogenicity Yersinia enterocolitica strain 8081.</title>
        <authorList>
            <person name="Thomson N.R."/>
            <person name="Howard S."/>
            <person name="Wren B.W."/>
            <person name="Holden M.T.G."/>
            <person name="Crossman L."/>
            <person name="Challis G.L."/>
            <person name="Churcher C."/>
            <person name="Mungall K."/>
            <person name="Brooks K."/>
            <person name="Chillingworth T."/>
            <person name="Feltwell T."/>
            <person name="Abdellah Z."/>
            <person name="Hauser H."/>
            <person name="Jagels K."/>
            <person name="Maddison M."/>
            <person name="Moule S."/>
            <person name="Sanders M."/>
            <person name="Whitehead S."/>
            <person name="Quail M.A."/>
            <person name="Dougan G."/>
            <person name="Parkhill J."/>
            <person name="Prentice M.B."/>
        </authorList>
    </citation>
    <scope>NUCLEOTIDE SEQUENCE [LARGE SCALE GENOMIC DNA]</scope>
    <source>
        <strain>NCTC 13174 / 8081</strain>
    </source>
</reference>
<name>GRPE_YERE8</name>
<evidence type="ECO:0000255" key="1">
    <source>
        <dbReference type="HAMAP-Rule" id="MF_01151"/>
    </source>
</evidence>
<evidence type="ECO:0000256" key="2">
    <source>
        <dbReference type="SAM" id="MobiDB-lite"/>
    </source>
</evidence>
<sequence>MSSKEQKTPNEQVSEEMENAAEQQVEATQETGEGVDPRVAELEAQLAAAVQRERESLLRAKAEVENIRRRTEQDVEKAHKFALEKFSAELLPVIDNLERALDTADKTNAELAAMIEGVELTLKSLLDAVGKYGIQVVSETNVPFNPEVHQAMTMLESADHEPNHVMMVMQKGYTLNGRLLRPAMVAVSKAKA</sequence>
<accession>A1JKI6</accession>
<dbReference type="EMBL" id="AM286415">
    <property type="protein sequence ID" value="CAL11098.1"/>
    <property type="molecule type" value="Genomic_DNA"/>
</dbReference>
<dbReference type="RefSeq" id="WP_005172778.1">
    <property type="nucleotide sequence ID" value="NC_008800.1"/>
</dbReference>
<dbReference type="RefSeq" id="YP_001005333.1">
    <property type="nucleotide sequence ID" value="NC_008800.1"/>
</dbReference>
<dbReference type="SMR" id="A1JKI6"/>
<dbReference type="KEGG" id="yen:YE1000"/>
<dbReference type="PATRIC" id="fig|393305.7.peg.1095"/>
<dbReference type="eggNOG" id="COG0576">
    <property type="taxonomic scope" value="Bacteria"/>
</dbReference>
<dbReference type="HOGENOM" id="CLU_057217_6_0_6"/>
<dbReference type="OrthoDB" id="9789811at2"/>
<dbReference type="Proteomes" id="UP000000642">
    <property type="component" value="Chromosome"/>
</dbReference>
<dbReference type="GO" id="GO:0005829">
    <property type="term" value="C:cytosol"/>
    <property type="evidence" value="ECO:0007669"/>
    <property type="project" value="TreeGrafter"/>
</dbReference>
<dbReference type="GO" id="GO:0000774">
    <property type="term" value="F:adenyl-nucleotide exchange factor activity"/>
    <property type="evidence" value="ECO:0007669"/>
    <property type="project" value="InterPro"/>
</dbReference>
<dbReference type="GO" id="GO:0042803">
    <property type="term" value="F:protein homodimerization activity"/>
    <property type="evidence" value="ECO:0007669"/>
    <property type="project" value="InterPro"/>
</dbReference>
<dbReference type="GO" id="GO:0051087">
    <property type="term" value="F:protein-folding chaperone binding"/>
    <property type="evidence" value="ECO:0007669"/>
    <property type="project" value="InterPro"/>
</dbReference>
<dbReference type="GO" id="GO:0051082">
    <property type="term" value="F:unfolded protein binding"/>
    <property type="evidence" value="ECO:0007669"/>
    <property type="project" value="TreeGrafter"/>
</dbReference>
<dbReference type="GO" id="GO:0006457">
    <property type="term" value="P:protein folding"/>
    <property type="evidence" value="ECO:0007669"/>
    <property type="project" value="InterPro"/>
</dbReference>
<dbReference type="CDD" id="cd00446">
    <property type="entry name" value="GrpE"/>
    <property type="match status" value="1"/>
</dbReference>
<dbReference type="FunFam" id="2.30.22.10:FF:000001">
    <property type="entry name" value="Protein GrpE"/>
    <property type="match status" value="1"/>
</dbReference>
<dbReference type="FunFam" id="3.90.20.20:FF:000001">
    <property type="entry name" value="Protein GrpE"/>
    <property type="match status" value="1"/>
</dbReference>
<dbReference type="Gene3D" id="3.90.20.20">
    <property type="match status" value="1"/>
</dbReference>
<dbReference type="Gene3D" id="2.30.22.10">
    <property type="entry name" value="Head domain of nucleotide exchange factor GrpE"/>
    <property type="match status" value="1"/>
</dbReference>
<dbReference type="HAMAP" id="MF_01151">
    <property type="entry name" value="GrpE"/>
    <property type="match status" value="1"/>
</dbReference>
<dbReference type="InterPro" id="IPR000740">
    <property type="entry name" value="GrpE"/>
</dbReference>
<dbReference type="InterPro" id="IPR013805">
    <property type="entry name" value="GrpE_coiled_coil"/>
</dbReference>
<dbReference type="InterPro" id="IPR009012">
    <property type="entry name" value="GrpE_head"/>
</dbReference>
<dbReference type="NCBIfam" id="NF010737">
    <property type="entry name" value="PRK14139.1"/>
    <property type="match status" value="1"/>
</dbReference>
<dbReference type="NCBIfam" id="NF010738">
    <property type="entry name" value="PRK14140.1"/>
    <property type="match status" value="1"/>
</dbReference>
<dbReference type="NCBIfam" id="NF010748">
    <property type="entry name" value="PRK14150.1"/>
    <property type="match status" value="1"/>
</dbReference>
<dbReference type="PANTHER" id="PTHR21237">
    <property type="entry name" value="GRPE PROTEIN"/>
    <property type="match status" value="1"/>
</dbReference>
<dbReference type="PANTHER" id="PTHR21237:SF23">
    <property type="entry name" value="GRPE PROTEIN HOMOLOG, MITOCHONDRIAL"/>
    <property type="match status" value="1"/>
</dbReference>
<dbReference type="Pfam" id="PF01025">
    <property type="entry name" value="GrpE"/>
    <property type="match status" value="1"/>
</dbReference>
<dbReference type="PRINTS" id="PR00773">
    <property type="entry name" value="GRPEPROTEIN"/>
</dbReference>
<dbReference type="SUPFAM" id="SSF58014">
    <property type="entry name" value="Coiled-coil domain of nucleotide exchange factor GrpE"/>
    <property type="match status" value="1"/>
</dbReference>
<dbReference type="SUPFAM" id="SSF51064">
    <property type="entry name" value="Head domain of nucleotide exchange factor GrpE"/>
    <property type="match status" value="1"/>
</dbReference>
<dbReference type="PROSITE" id="PS01071">
    <property type="entry name" value="GRPE"/>
    <property type="match status" value="1"/>
</dbReference>
<keyword id="KW-0143">Chaperone</keyword>
<keyword id="KW-0963">Cytoplasm</keyword>
<keyword id="KW-0346">Stress response</keyword>
<organism>
    <name type="scientific">Yersinia enterocolitica serotype O:8 / biotype 1B (strain NCTC 13174 / 8081)</name>
    <dbReference type="NCBI Taxonomy" id="393305"/>
    <lineage>
        <taxon>Bacteria</taxon>
        <taxon>Pseudomonadati</taxon>
        <taxon>Pseudomonadota</taxon>
        <taxon>Gammaproteobacteria</taxon>
        <taxon>Enterobacterales</taxon>
        <taxon>Yersiniaceae</taxon>
        <taxon>Yersinia</taxon>
    </lineage>
</organism>
<proteinExistence type="inferred from homology"/>
<protein>
    <recommendedName>
        <fullName evidence="1">Protein GrpE</fullName>
    </recommendedName>
    <alternativeName>
        <fullName evidence="1">HSP-70 cofactor</fullName>
    </alternativeName>
</protein>
<gene>
    <name evidence="1" type="primary">grpE</name>
    <name type="ordered locus">YE1000</name>
</gene>
<comment type="function">
    <text evidence="1">Participates actively in the response to hyperosmotic and heat shock by preventing the aggregation of stress-denatured proteins, in association with DnaK and GrpE. It is the nucleotide exchange factor for DnaK and may function as a thermosensor. Unfolded proteins bind initially to DnaJ; upon interaction with the DnaJ-bound protein, DnaK hydrolyzes its bound ATP, resulting in the formation of a stable complex. GrpE releases ADP from DnaK; ATP binding to DnaK triggers the release of the substrate protein, thus completing the reaction cycle. Several rounds of ATP-dependent interactions between DnaJ, DnaK and GrpE are required for fully efficient folding.</text>
</comment>
<comment type="subunit">
    <text evidence="1">Homodimer.</text>
</comment>
<comment type="subcellular location">
    <subcellularLocation>
        <location evidence="1">Cytoplasm</location>
    </subcellularLocation>
</comment>
<comment type="similarity">
    <text evidence="1">Belongs to the GrpE family.</text>
</comment>